<dbReference type="EMBL" id="AK124560">
    <property type="status" value="NOT_ANNOTATED_CDS"/>
    <property type="molecule type" value="mRNA"/>
</dbReference>
<dbReference type="BioMuta" id="-"/>
<dbReference type="neXtProt" id="NX_Q6ZVH6"/>
<dbReference type="InParanoid" id="Q6ZVH6"/>
<dbReference type="PAN-GO" id="Q6ZVH6">
    <property type="GO annotations" value="0 GO annotations based on evolutionary models"/>
</dbReference>
<dbReference type="PhylomeDB" id="Q6ZVH6"/>
<dbReference type="Pharos" id="Q6ZVH6">
    <property type="development level" value="Tdark"/>
</dbReference>
<dbReference type="Proteomes" id="UP000005640">
    <property type="component" value="Unplaced"/>
</dbReference>
<dbReference type="RNAct" id="Q6ZVH6">
    <property type="molecule type" value="protein"/>
</dbReference>
<feature type="chain" id="PRO_0000319057" description="Putative uncharacterized protein FLJ42569">
    <location>
        <begin position="1"/>
        <end position="145"/>
    </location>
</feature>
<proteinExistence type="evidence at transcript level"/>
<organism>
    <name type="scientific">Homo sapiens</name>
    <name type="common">Human</name>
    <dbReference type="NCBI Taxonomy" id="9606"/>
    <lineage>
        <taxon>Eukaryota</taxon>
        <taxon>Metazoa</taxon>
        <taxon>Chordata</taxon>
        <taxon>Craniata</taxon>
        <taxon>Vertebrata</taxon>
        <taxon>Euteleostomi</taxon>
        <taxon>Mammalia</taxon>
        <taxon>Eutheria</taxon>
        <taxon>Euarchontoglires</taxon>
        <taxon>Primates</taxon>
        <taxon>Haplorrhini</taxon>
        <taxon>Catarrhini</taxon>
        <taxon>Hominidae</taxon>
        <taxon>Homo</taxon>
    </lineage>
</organism>
<accession>Q6ZVH6</accession>
<name>YK004_HUMAN</name>
<sequence>MGPWPRDWLGKGWRLGSCEARAGAKEVSVIRHGAPNPAQSHLHVQARAQVHSEDGHSLPPVVDGEDEVLSLLVFVQDSQECCRQAVQGRQGRGVTWGLGLPSYHLRTLLSPVCVPARDQRAPRKCCEAVLACPLVETLVTTLLTR</sequence>
<reference key="1">
    <citation type="journal article" date="2004" name="Nat. Genet.">
        <title>Complete sequencing and characterization of 21,243 full-length human cDNAs.</title>
        <authorList>
            <person name="Ota T."/>
            <person name="Suzuki Y."/>
            <person name="Nishikawa T."/>
            <person name="Otsuki T."/>
            <person name="Sugiyama T."/>
            <person name="Irie R."/>
            <person name="Wakamatsu A."/>
            <person name="Hayashi K."/>
            <person name="Sato H."/>
            <person name="Nagai K."/>
            <person name="Kimura K."/>
            <person name="Makita H."/>
            <person name="Sekine M."/>
            <person name="Obayashi M."/>
            <person name="Nishi T."/>
            <person name="Shibahara T."/>
            <person name="Tanaka T."/>
            <person name="Ishii S."/>
            <person name="Yamamoto J."/>
            <person name="Saito K."/>
            <person name="Kawai Y."/>
            <person name="Isono Y."/>
            <person name="Nakamura Y."/>
            <person name="Nagahari K."/>
            <person name="Murakami K."/>
            <person name="Yasuda T."/>
            <person name="Iwayanagi T."/>
            <person name="Wagatsuma M."/>
            <person name="Shiratori A."/>
            <person name="Sudo H."/>
            <person name="Hosoiri T."/>
            <person name="Kaku Y."/>
            <person name="Kodaira H."/>
            <person name="Kondo H."/>
            <person name="Sugawara M."/>
            <person name="Takahashi M."/>
            <person name="Kanda K."/>
            <person name="Yokoi T."/>
            <person name="Furuya T."/>
            <person name="Kikkawa E."/>
            <person name="Omura Y."/>
            <person name="Abe K."/>
            <person name="Kamihara K."/>
            <person name="Katsuta N."/>
            <person name="Sato K."/>
            <person name="Tanikawa M."/>
            <person name="Yamazaki M."/>
            <person name="Ninomiya K."/>
            <person name="Ishibashi T."/>
            <person name="Yamashita H."/>
            <person name="Murakawa K."/>
            <person name="Fujimori K."/>
            <person name="Tanai H."/>
            <person name="Kimata M."/>
            <person name="Watanabe M."/>
            <person name="Hiraoka S."/>
            <person name="Chiba Y."/>
            <person name="Ishida S."/>
            <person name="Ono Y."/>
            <person name="Takiguchi S."/>
            <person name="Watanabe S."/>
            <person name="Yosida M."/>
            <person name="Hotuta T."/>
            <person name="Kusano J."/>
            <person name="Kanehori K."/>
            <person name="Takahashi-Fujii A."/>
            <person name="Hara H."/>
            <person name="Tanase T.-O."/>
            <person name="Nomura Y."/>
            <person name="Togiya S."/>
            <person name="Komai F."/>
            <person name="Hara R."/>
            <person name="Takeuchi K."/>
            <person name="Arita M."/>
            <person name="Imose N."/>
            <person name="Musashino K."/>
            <person name="Yuuki H."/>
            <person name="Oshima A."/>
            <person name="Sasaki N."/>
            <person name="Aotsuka S."/>
            <person name="Yoshikawa Y."/>
            <person name="Matsunawa H."/>
            <person name="Ichihara T."/>
            <person name="Shiohata N."/>
            <person name="Sano S."/>
            <person name="Moriya S."/>
            <person name="Momiyama H."/>
            <person name="Satoh N."/>
            <person name="Takami S."/>
            <person name="Terashima Y."/>
            <person name="Suzuki O."/>
            <person name="Nakagawa S."/>
            <person name="Senoh A."/>
            <person name="Mizoguchi H."/>
            <person name="Goto Y."/>
            <person name="Shimizu F."/>
            <person name="Wakebe H."/>
            <person name="Hishigaki H."/>
            <person name="Watanabe T."/>
            <person name="Sugiyama A."/>
            <person name="Takemoto M."/>
            <person name="Kawakami B."/>
            <person name="Yamazaki M."/>
            <person name="Watanabe K."/>
            <person name="Kumagai A."/>
            <person name="Itakura S."/>
            <person name="Fukuzumi Y."/>
            <person name="Fujimori Y."/>
            <person name="Komiyama M."/>
            <person name="Tashiro H."/>
            <person name="Tanigami A."/>
            <person name="Fujiwara T."/>
            <person name="Ono T."/>
            <person name="Yamada K."/>
            <person name="Fujii Y."/>
            <person name="Ozaki K."/>
            <person name="Hirao M."/>
            <person name="Ohmori Y."/>
            <person name="Kawabata A."/>
            <person name="Hikiji T."/>
            <person name="Kobatake N."/>
            <person name="Inagaki H."/>
            <person name="Ikema Y."/>
            <person name="Okamoto S."/>
            <person name="Okitani R."/>
            <person name="Kawakami T."/>
            <person name="Noguchi S."/>
            <person name="Itoh T."/>
            <person name="Shigeta K."/>
            <person name="Senba T."/>
            <person name="Matsumura K."/>
            <person name="Nakajima Y."/>
            <person name="Mizuno T."/>
            <person name="Morinaga M."/>
            <person name="Sasaki M."/>
            <person name="Togashi T."/>
            <person name="Oyama M."/>
            <person name="Hata H."/>
            <person name="Watanabe M."/>
            <person name="Komatsu T."/>
            <person name="Mizushima-Sugano J."/>
            <person name="Satoh T."/>
            <person name="Shirai Y."/>
            <person name="Takahashi Y."/>
            <person name="Nakagawa K."/>
            <person name="Okumura K."/>
            <person name="Nagase T."/>
            <person name="Nomura N."/>
            <person name="Kikuchi H."/>
            <person name="Masuho Y."/>
            <person name="Yamashita R."/>
            <person name="Nakai K."/>
            <person name="Yada T."/>
            <person name="Nakamura Y."/>
            <person name="Ohara O."/>
            <person name="Isogai T."/>
            <person name="Sugano S."/>
        </authorList>
    </citation>
    <scope>NUCLEOTIDE SEQUENCE [LARGE SCALE MRNA]</scope>
    <source>
        <tissue>Cerebellum</tissue>
    </source>
</reference>
<keyword id="KW-1185">Reference proteome</keyword>
<protein>
    <recommendedName>
        <fullName>Putative uncharacterized protein FLJ42569</fullName>
    </recommendedName>
</protein>